<feature type="chain" id="PRO_1000145251" description="ATP synthase subunit a">
    <location>
        <begin position="1"/>
        <end position="291"/>
    </location>
</feature>
<feature type="transmembrane region" description="Helical" evidence="1">
    <location>
        <begin position="50"/>
        <end position="70"/>
    </location>
</feature>
<feature type="transmembrane region" description="Helical" evidence="1">
    <location>
        <begin position="108"/>
        <end position="128"/>
    </location>
</feature>
<feature type="transmembrane region" description="Helical" evidence="1">
    <location>
        <begin position="129"/>
        <end position="149"/>
    </location>
</feature>
<feature type="transmembrane region" description="Helical" evidence="1">
    <location>
        <begin position="161"/>
        <end position="181"/>
    </location>
</feature>
<feature type="transmembrane region" description="Helical" evidence="1">
    <location>
        <begin position="203"/>
        <end position="223"/>
    </location>
</feature>
<feature type="transmembrane region" description="Helical" evidence="1">
    <location>
        <begin position="241"/>
        <end position="261"/>
    </location>
</feature>
<feature type="transmembrane region" description="Helical" evidence="1">
    <location>
        <begin position="262"/>
        <end position="282"/>
    </location>
</feature>
<keyword id="KW-0066">ATP synthesis</keyword>
<keyword id="KW-0997">Cell inner membrane</keyword>
<keyword id="KW-1003">Cell membrane</keyword>
<keyword id="KW-0138">CF(0)</keyword>
<keyword id="KW-0375">Hydrogen ion transport</keyword>
<keyword id="KW-0406">Ion transport</keyword>
<keyword id="KW-0472">Membrane</keyword>
<keyword id="KW-0812">Transmembrane</keyword>
<keyword id="KW-1133">Transmembrane helix</keyword>
<keyword id="KW-0813">Transport</keyword>
<comment type="function">
    <text evidence="1">Key component of the proton channel; it plays a direct role in the translocation of protons across the membrane.</text>
</comment>
<comment type="subunit">
    <text evidence="1">F-type ATPases have 2 components, CF(1) - the catalytic core - and CF(0) - the membrane proton channel. CF(1) has five subunits: alpha(3), beta(3), gamma(1), delta(1), epsilon(1). CF(0) has three main subunits: a(1), b(2) and c(9-12). The alpha and beta chains form an alternating ring which encloses part of the gamma chain. CF(1) is attached to CF(0) by a central stalk formed by the gamma and epsilon chains, while a peripheral stalk is formed by the delta and b chains.</text>
</comment>
<comment type="subcellular location">
    <subcellularLocation>
        <location evidence="1">Cell inner membrane</location>
        <topology evidence="1">Multi-pass membrane protein</topology>
    </subcellularLocation>
</comment>
<comment type="similarity">
    <text evidence="1">Belongs to the ATPase A chain family.</text>
</comment>
<protein>
    <recommendedName>
        <fullName evidence="1">ATP synthase subunit a</fullName>
    </recommendedName>
    <alternativeName>
        <fullName evidence="1">ATP synthase F0 sector subunit a</fullName>
    </alternativeName>
    <alternativeName>
        <fullName evidence="1">F-ATPase subunit 6</fullName>
    </alternativeName>
</protein>
<accession>B7H2A0</accession>
<gene>
    <name evidence="1" type="primary">atpB</name>
    <name type="ordered locus">ABBFA_003371</name>
</gene>
<organism>
    <name type="scientific">Acinetobacter baumannii (strain AB307-0294)</name>
    <dbReference type="NCBI Taxonomy" id="557600"/>
    <lineage>
        <taxon>Bacteria</taxon>
        <taxon>Pseudomonadati</taxon>
        <taxon>Pseudomonadota</taxon>
        <taxon>Gammaproteobacteria</taxon>
        <taxon>Moraxellales</taxon>
        <taxon>Moraxellaceae</taxon>
        <taxon>Acinetobacter</taxon>
        <taxon>Acinetobacter calcoaceticus/baumannii complex</taxon>
    </lineage>
</organism>
<proteinExistence type="inferred from homology"/>
<reference key="1">
    <citation type="journal article" date="2008" name="J. Bacteriol.">
        <title>Comparative genome sequence analysis of multidrug-resistant Acinetobacter baumannii.</title>
        <authorList>
            <person name="Adams M.D."/>
            <person name="Goglin K."/>
            <person name="Molyneaux N."/>
            <person name="Hujer K.M."/>
            <person name="Lavender H."/>
            <person name="Jamison J.J."/>
            <person name="MacDonald I.J."/>
            <person name="Martin K.M."/>
            <person name="Russo T."/>
            <person name="Campagnari A.A."/>
            <person name="Hujer A.M."/>
            <person name="Bonomo R.A."/>
            <person name="Gill S.R."/>
        </authorList>
    </citation>
    <scope>NUCLEOTIDE SEQUENCE [LARGE SCALE GENOMIC DNA]</scope>
    <source>
        <strain>AB307-0294</strain>
    </source>
</reference>
<name>ATP6_ACIB3</name>
<dbReference type="EMBL" id="CP001172">
    <property type="protein sequence ID" value="ACJ57435.1"/>
    <property type="molecule type" value="Genomic_DNA"/>
</dbReference>
<dbReference type="RefSeq" id="WP_000718586.1">
    <property type="nucleotide sequence ID" value="NZ_CP001172.1"/>
</dbReference>
<dbReference type="SMR" id="B7H2A0"/>
<dbReference type="GeneID" id="92892161"/>
<dbReference type="HOGENOM" id="CLU_041018_1_0_6"/>
<dbReference type="Proteomes" id="UP000006924">
    <property type="component" value="Chromosome"/>
</dbReference>
<dbReference type="GO" id="GO:0005886">
    <property type="term" value="C:plasma membrane"/>
    <property type="evidence" value="ECO:0007669"/>
    <property type="project" value="UniProtKB-SubCell"/>
</dbReference>
<dbReference type="GO" id="GO:0045259">
    <property type="term" value="C:proton-transporting ATP synthase complex"/>
    <property type="evidence" value="ECO:0007669"/>
    <property type="project" value="UniProtKB-KW"/>
</dbReference>
<dbReference type="GO" id="GO:0046933">
    <property type="term" value="F:proton-transporting ATP synthase activity, rotational mechanism"/>
    <property type="evidence" value="ECO:0007669"/>
    <property type="project" value="UniProtKB-UniRule"/>
</dbReference>
<dbReference type="GO" id="GO:0042777">
    <property type="term" value="P:proton motive force-driven plasma membrane ATP synthesis"/>
    <property type="evidence" value="ECO:0007669"/>
    <property type="project" value="TreeGrafter"/>
</dbReference>
<dbReference type="CDD" id="cd00310">
    <property type="entry name" value="ATP-synt_Fo_a_6"/>
    <property type="match status" value="1"/>
</dbReference>
<dbReference type="FunFam" id="1.20.120.220:FF:000002">
    <property type="entry name" value="ATP synthase subunit a"/>
    <property type="match status" value="1"/>
</dbReference>
<dbReference type="Gene3D" id="1.20.120.220">
    <property type="entry name" value="ATP synthase, F0 complex, subunit A"/>
    <property type="match status" value="1"/>
</dbReference>
<dbReference type="HAMAP" id="MF_01393">
    <property type="entry name" value="ATP_synth_a_bact"/>
    <property type="match status" value="1"/>
</dbReference>
<dbReference type="InterPro" id="IPR045082">
    <property type="entry name" value="ATP_syn_F0_a_bact/chloroplast"/>
</dbReference>
<dbReference type="InterPro" id="IPR000568">
    <property type="entry name" value="ATP_synth_F0_asu"/>
</dbReference>
<dbReference type="InterPro" id="IPR023011">
    <property type="entry name" value="ATP_synth_F0_asu_AS"/>
</dbReference>
<dbReference type="InterPro" id="IPR035908">
    <property type="entry name" value="F0_ATP_A_sf"/>
</dbReference>
<dbReference type="NCBIfam" id="TIGR01131">
    <property type="entry name" value="ATP_synt_6_or_A"/>
    <property type="match status" value="1"/>
</dbReference>
<dbReference type="NCBIfam" id="NF004477">
    <property type="entry name" value="PRK05815.1-1"/>
    <property type="match status" value="1"/>
</dbReference>
<dbReference type="PANTHER" id="PTHR42823">
    <property type="entry name" value="ATP SYNTHASE SUBUNIT A, CHLOROPLASTIC"/>
    <property type="match status" value="1"/>
</dbReference>
<dbReference type="PANTHER" id="PTHR42823:SF3">
    <property type="entry name" value="ATP SYNTHASE SUBUNIT A, CHLOROPLASTIC"/>
    <property type="match status" value="1"/>
</dbReference>
<dbReference type="Pfam" id="PF00119">
    <property type="entry name" value="ATP-synt_A"/>
    <property type="match status" value="1"/>
</dbReference>
<dbReference type="SUPFAM" id="SSF81336">
    <property type="entry name" value="F1F0 ATP synthase subunit A"/>
    <property type="match status" value="1"/>
</dbReference>
<dbReference type="PROSITE" id="PS00449">
    <property type="entry name" value="ATPASE_A"/>
    <property type="match status" value="1"/>
</dbReference>
<sequence>MAAEEHALTSTEYIKHHLTNMTYGKMPDGTWKLAETAEEAHSMGFTAIHLDSMGWSIGLGVIFCLLFWIVARAANAGVPTKFQSAIEMIIEFVDSSVRDTFHGKSRLIAPLALTIFVWIFLMNLMDLIPVDWIPQVAAFVGANVFGMDPHHVYFKIVPSTDPNITLGMSLSVFVLILFYSIREKGVGGFVGELALNPFNPSNPVAKALLIPVNLILELVTFLARPISLALRLFGNMYAGELIFILIALLPFWIQWALSVPWAIFHILVITLQAFIFMMLTIVYLSMASEKH</sequence>
<evidence type="ECO:0000255" key="1">
    <source>
        <dbReference type="HAMAP-Rule" id="MF_01393"/>
    </source>
</evidence>